<proteinExistence type="evidence at protein level"/>
<comment type="function">
    <text evidence="1 2">The ternary complex containing UFD1, VCP and NPLOC4 binds ubiquitinated proteins and is necessary for the export of misfolded proteins from the ER to the cytoplasm, where they are degraded by the proteasome. The NPLOC4-UFD1-VCP complex regulates spindle disassembly at the end of mitosis and is necessary for the formation of a closed nuclear envelope (By similarity). Acts as a negative regulator of type I interferon production via the complex formed with VCP and UFD1, which binds to RIGI and recruits RNF125 to promote ubiquitination and degradation of RIGI (By similarity).</text>
</comment>
<comment type="pathway">
    <text>Protein degradation; proteasomal ubiquitin-dependent pathway.</text>
</comment>
<comment type="subunit">
    <text evidence="2 5">Heterodimer with UFD1. The heterodimer binds ubiquitinated proteins. The heterodimer binds to VCP and inhibits Golgi membrane fusion (By similarity). Interacts with ZFAND2B; probably through VCP (PubMed:24160817).</text>
</comment>
<comment type="subcellular location">
    <subcellularLocation>
        <location evidence="2">Cytoplasm</location>
        <location evidence="2">Cytosol</location>
    </subcellularLocation>
    <subcellularLocation>
        <location evidence="2">Endoplasmic reticulum</location>
    </subcellularLocation>
    <subcellularLocation>
        <location evidence="2">Nucleus</location>
    </subcellularLocation>
    <text evidence="2">Associated with the endoplasmic reticulum and nuclear.</text>
</comment>
<comment type="alternative products">
    <event type="alternative splicing"/>
    <isoform>
        <id>P60670-1</id>
        <name>1</name>
        <sequence type="displayed"/>
    </isoform>
    <isoform>
        <id>P60670-2</id>
        <name>2</name>
        <sequence type="described" ref="VSP_009790"/>
    </isoform>
</comment>
<comment type="domain">
    <text evidence="2">Binds ubiquitinated proteins via its RanBP2-type zinc finger.</text>
</comment>
<comment type="similarity">
    <text evidence="7">Belongs to the NPL4 family.</text>
</comment>
<comment type="sequence caution" evidence="7">
    <conflict type="erroneous initiation">
        <sequence resource="EMBL-CDS" id="BAC98185"/>
    </conflict>
</comment>
<dbReference type="EMBL" id="AK129375">
    <property type="protein sequence ID" value="BAC98185.1"/>
    <property type="status" value="ALT_INIT"/>
    <property type="molecule type" value="mRNA"/>
</dbReference>
<dbReference type="EMBL" id="AL669855">
    <property type="status" value="NOT_ANNOTATED_CDS"/>
    <property type="molecule type" value="Genomic_DNA"/>
</dbReference>
<dbReference type="EMBL" id="BC065156">
    <property type="protein sequence ID" value="AAH65156.1"/>
    <property type="molecule type" value="mRNA"/>
</dbReference>
<dbReference type="CCDS" id="CCDS25732.1">
    <molecule id="P60670-2"/>
</dbReference>
<dbReference type="CCDS" id="CCDS56827.1">
    <molecule id="P60670-1"/>
</dbReference>
<dbReference type="RefSeq" id="NP_001181952.1">
    <molecule id="P60670-1"/>
    <property type="nucleotide sequence ID" value="NM_001195023.1"/>
</dbReference>
<dbReference type="RefSeq" id="NP_955763.1">
    <molecule id="P60670-2"/>
    <property type="nucleotide sequence ID" value="NM_199469.2"/>
</dbReference>
<dbReference type="PDB" id="2PJH">
    <property type="method" value="NMR"/>
    <property type="chains" value="A=1-80"/>
</dbReference>
<dbReference type="PDBsum" id="2PJH"/>
<dbReference type="SMR" id="P60670"/>
<dbReference type="BioGRID" id="229901">
    <property type="interactions" value="37"/>
</dbReference>
<dbReference type="ComplexPortal" id="CPX-136">
    <property type="entry name" value="Vcp-Npl4-Ufd1 AAA ATPase complex"/>
</dbReference>
<dbReference type="CORUM" id="P60670"/>
<dbReference type="FunCoup" id="P60670">
    <property type="interactions" value="4505"/>
</dbReference>
<dbReference type="IntAct" id="P60670">
    <property type="interactions" value="3"/>
</dbReference>
<dbReference type="STRING" id="10090.ENSMUSP00000035851"/>
<dbReference type="GlyGen" id="P60670">
    <property type="glycosylation" value="1 site, 1 O-linked glycan (1 site)"/>
</dbReference>
<dbReference type="iPTMnet" id="P60670"/>
<dbReference type="PhosphoSitePlus" id="P60670"/>
<dbReference type="SwissPalm" id="P60670"/>
<dbReference type="jPOST" id="P60670"/>
<dbReference type="PaxDb" id="10090-ENSMUSP00000099306"/>
<dbReference type="PeptideAtlas" id="P60670"/>
<dbReference type="ProteomicsDB" id="295511">
    <molecule id="P60670-1"/>
</dbReference>
<dbReference type="ProteomicsDB" id="295512">
    <molecule id="P60670-2"/>
</dbReference>
<dbReference type="Pumba" id="P60670"/>
<dbReference type="Antibodypedia" id="10070">
    <property type="antibodies" value="138 antibodies from 28 providers"/>
</dbReference>
<dbReference type="DNASU" id="217365"/>
<dbReference type="Ensembl" id="ENSMUST00000044271.15">
    <molecule id="P60670-1"/>
    <property type="protein sequence ID" value="ENSMUSP00000035851.9"/>
    <property type="gene ID" value="ENSMUSG00000039703.17"/>
</dbReference>
<dbReference type="Ensembl" id="ENSMUST00000103017.4">
    <molecule id="P60670-2"/>
    <property type="protein sequence ID" value="ENSMUSP00000099306.4"/>
    <property type="gene ID" value="ENSMUSG00000039703.17"/>
</dbReference>
<dbReference type="GeneID" id="217365"/>
<dbReference type="KEGG" id="mmu:217365"/>
<dbReference type="UCSC" id="uc007msp.2">
    <molecule id="P60670-2"/>
    <property type="organism name" value="mouse"/>
</dbReference>
<dbReference type="UCSC" id="uc007msq.2">
    <molecule id="P60670-1"/>
    <property type="organism name" value="mouse"/>
</dbReference>
<dbReference type="AGR" id="MGI:2679787"/>
<dbReference type="CTD" id="55666"/>
<dbReference type="MGI" id="MGI:2679787">
    <property type="gene designation" value="Nploc4"/>
</dbReference>
<dbReference type="VEuPathDB" id="HostDB:ENSMUSG00000039703"/>
<dbReference type="eggNOG" id="KOG2834">
    <property type="taxonomic scope" value="Eukaryota"/>
</dbReference>
<dbReference type="GeneTree" id="ENSGT00390000018731"/>
<dbReference type="HOGENOM" id="CLU_017172_2_0_1"/>
<dbReference type="InParanoid" id="P60670"/>
<dbReference type="OMA" id="KWSRTGR"/>
<dbReference type="OrthoDB" id="10251089at2759"/>
<dbReference type="PhylomeDB" id="P60670"/>
<dbReference type="TreeFam" id="TF314173"/>
<dbReference type="Reactome" id="R-MMU-110320">
    <property type="pathway name" value="Translesion Synthesis by POLH"/>
</dbReference>
<dbReference type="Reactome" id="R-MMU-8951664">
    <property type="pathway name" value="Neddylation"/>
</dbReference>
<dbReference type="Reactome" id="R-MMU-9755511">
    <property type="pathway name" value="KEAP1-NFE2L2 pathway"/>
</dbReference>
<dbReference type="UniPathway" id="UPA00144"/>
<dbReference type="BioGRID-ORCS" id="217365">
    <property type="hits" value="27 hits in 78 CRISPR screens"/>
</dbReference>
<dbReference type="ChiTaRS" id="Nploc4">
    <property type="organism name" value="mouse"/>
</dbReference>
<dbReference type="EvolutionaryTrace" id="P60670"/>
<dbReference type="PRO" id="PR:P60670"/>
<dbReference type="Proteomes" id="UP000000589">
    <property type="component" value="Chromosome 11"/>
</dbReference>
<dbReference type="RNAct" id="P60670">
    <property type="molecule type" value="protein"/>
</dbReference>
<dbReference type="Bgee" id="ENSMUSG00000039703">
    <property type="expression patterns" value="Expressed in spermatocyte and 249 other cell types or tissues"/>
</dbReference>
<dbReference type="GO" id="GO:0005829">
    <property type="term" value="C:cytosol"/>
    <property type="evidence" value="ECO:0007669"/>
    <property type="project" value="UniProtKB-SubCell"/>
</dbReference>
<dbReference type="GO" id="GO:0005783">
    <property type="term" value="C:endoplasmic reticulum"/>
    <property type="evidence" value="ECO:0000250"/>
    <property type="project" value="HGNC-UCL"/>
</dbReference>
<dbReference type="GO" id="GO:0042175">
    <property type="term" value="C:nuclear outer membrane-endoplasmic reticulum membrane network"/>
    <property type="evidence" value="ECO:0000250"/>
    <property type="project" value="HGNC-UCL"/>
</dbReference>
<dbReference type="GO" id="GO:0005634">
    <property type="term" value="C:nucleus"/>
    <property type="evidence" value="ECO:0007669"/>
    <property type="project" value="UniProtKB-SubCell"/>
</dbReference>
<dbReference type="GO" id="GO:0036501">
    <property type="term" value="C:UFD1-NPL4 complex"/>
    <property type="evidence" value="ECO:0000250"/>
    <property type="project" value="ParkinsonsUK-UCL"/>
</dbReference>
<dbReference type="GO" id="GO:0034098">
    <property type="term" value="C:VCP-NPL4-UFD1 AAA ATPase complex"/>
    <property type="evidence" value="ECO:0000269"/>
    <property type="project" value="ComplexPortal"/>
</dbReference>
<dbReference type="GO" id="GO:0051117">
    <property type="term" value="F:ATPase binding"/>
    <property type="evidence" value="ECO:0007669"/>
    <property type="project" value="Ensembl"/>
</dbReference>
<dbReference type="GO" id="GO:0036435">
    <property type="term" value="F:K48-linked polyubiquitin modification-dependent protein binding"/>
    <property type="evidence" value="ECO:0007669"/>
    <property type="project" value="Ensembl"/>
</dbReference>
<dbReference type="GO" id="GO:0070530">
    <property type="term" value="F:K63-linked polyubiquitin modification-dependent protein binding"/>
    <property type="evidence" value="ECO:0007669"/>
    <property type="project" value="Ensembl"/>
</dbReference>
<dbReference type="GO" id="GO:0044877">
    <property type="term" value="F:protein-containing complex binding"/>
    <property type="evidence" value="ECO:0007669"/>
    <property type="project" value="Ensembl"/>
</dbReference>
<dbReference type="GO" id="GO:0043130">
    <property type="term" value="F:ubiquitin binding"/>
    <property type="evidence" value="ECO:0007669"/>
    <property type="project" value="Ensembl"/>
</dbReference>
<dbReference type="GO" id="GO:0031625">
    <property type="term" value="F:ubiquitin protein ligase binding"/>
    <property type="evidence" value="ECO:0007669"/>
    <property type="project" value="Ensembl"/>
</dbReference>
<dbReference type="GO" id="GO:0008270">
    <property type="term" value="F:zinc ion binding"/>
    <property type="evidence" value="ECO:0007669"/>
    <property type="project" value="UniProtKB-KW"/>
</dbReference>
<dbReference type="GO" id="GO:0036503">
    <property type="term" value="P:ERAD pathway"/>
    <property type="evidence" value="ECO:0000269"/>
    <property type="project" value="ComplexPortal"/>
</dbReference>
<dbReference type="GO" id="GO:0007030">
    <property type="term" value="P:Golgi organization"/>
    <property type="evidence" value="ECO:0000250"/>
    <property type="project" value="HGNC-UCL"/>
</dbReference>
<dbReference type="GO" id="GO:0039536">
    <property type="term" value="P:negative regulation of RIG-I signaling pathway"/>
    <property type="evidence" value="ECO:0000250"/>
    <property type="project" value="UniProtKB"/>
</dbReference>
<dbReference type="GO" id="GO:0032480">
    <property type="term" value="P:negative regulation of type I interferon production"/>
    <property type="evidence" value="ECO:0000250"/>
    <property type="project" value="UniProtKB"/>
</dbReference>
<dbReference type="GO" id="GO:0043161">
    <property type="term" value="P:proteasome-mediated ubiquitin-dependent protein catabolic process"/>
    <property type="evidence" value="ECO:0007669"/>
    <property type="project" value="UniProtKB-UniPathway"/>
</dbReference>
<dbReference type="GO" id="GO:0030970">
    <property type="term" value="P:retrograde protein transport, ER to cytosol"/>
    <property type="evidence" value="ECO:0000269"/>
    <property type="project" value="ComplexPortal"/>
</dbReference>
<dbReference type="GO" id="GO:0006511">
    <property type="term" value="P:ubiquitin-dependent protein catabolic process"/>
    <property type="evidence" value="ECO:0000250"/>
    <property type="project" value="UniProtKB"/>
</dbReference>
<dbReference type="CDD" id="cd08061">
    <property type="entry name" value="MPN_NPL4"/>
    <property type="match status" value="1"/>
</dbReference>
<dbReference type="FunFam" id="2.30.30.380:FF:000008">
    <property type="entry name" value="nuclear protein localization protein 4 homolog"/>
    <property type="match status" value="1"/>
</dbReference>
<dbReference type="FunFam" id="3.10.20.90:FF:000084">
    <property type="entry name" value="nuclear protein localization protein 4 homolog"/>
    <property type="match status" value="1"/>
</dbReference>
<dbReference type="FunFam" id="3.40.140.10:FF:000012">
    <property type="entry name" value="nuclear protein localization protein 4 homolog"/>
    <property type="match status" value="1"/>
</dbReference>
<dbReference type="Gene3D" id="3.40.140.10">
    <property type="entry name" value="Cytidine Deaminase, domain 2"/>
    <property type="match status" value="1"/>
</dbReference>
<dbReference type="Gene3D" id="3.10.20.90">
    <property type="entry name" value="Phosphatidylinositol 3-kinase Catalytic Subunit, Chain A, domain 1"/>
    <property type="match status" value="1"/>
</dbReference>
<dbReference type="Gene3D" id="2.30.30.380">
    <property type="entry name" value="Zn-finger domain of Sec23/24"/>
    <property type="match status" value="1"/>
</dbReference>
<dbReference type="IDEAL" id="IID50029"/>
<dbReference type="InterPro" id="IPR037518">
    <property type="entry name" value="MPN"/>
</dbReference>
<dbReference type="InterPro" id="IPR016563">
    <property type="entry name" value="Npl4"/>
</dbReference>
<dbReference type="InterPro" id="IPR007717">
    <property type="entry name" value="NPL4_C"/>
</dbReference>
<dbReference type="InterPro" id="IPR024682">
    <property type="entry name" value="Npl4_Ub-like_dom"/>
</dbReference>
<dbReference type="InterPro" id="IPR007716">
    <property type="entry name" value="NPL4_Zn-bd_put"/>
</dbReference>
<dbReference type="InterPro" id="IPR029071">
    <property type="entry name" value="Ubiquitin-like_domsf"/>
</dbReference>
<dbReference type="InterPro" id="IPR001876">
    <property type="entry name" value="Znf_RanBP2"/>
</dbReference>
<dbReference type="InterPro" id="IPR036443">
    <property type="entry name" value="Znf_RanBP2_sf"/>
</dbReference>
<dbReference type="PANTHER" id="PTHR12710">
    <property type="entry name" value="NUCLEAR PROTEIN LOCALIZATION 4"/>
    <property type="match status" value="1"/>
</dbReference>
<dbReference type="PANTHER" id="PTHR12710:SF0">
    <property type="entry name" value="NUCLEAR PROTEIN LOCALIZATION PROTEIN 4 HOMOLOG"/>
    <property type="match status" value="1"/>
</dbReference>
<dbReference type="Pfam" id="PF05021">
    <property type="entry name" value="NPL4"/>
    <property type="match status" value="1"/>
</dbReference>
<dbReference type="Pfam" id="PF11543">
    <property type="entry name" value="UN_NPL4"/>
    <property type="match status" value="1"/>
</dbReference>
<dbReference type="Pfam" id="PF05020">
    <property type="entry name" value="zf-NPL4"/>
    <property type="match status" value="1"/>
</dbReference>
<dbReference type="PIRSF" id="PIRSF010052">
    <property type="entry name" value="Polyub_prc_Npl4"/>
    <property type="match status" value="1"/>
</dbReference>
<dbReference type="SMART" id="SM00547">
    <property type="entry name" value="ZnF_RBZ"/>
    <property type="match status" value="1"/>
</dbReference>
<dbReference type="SUPFAM" id="SSF90209">
    <property type="entry name" value="Ran binding protein zinc finger-like"/>
    <property type="match status" value="1"/>
</dbReference>
<dbReference type="SUPFAM" id="SSF54236">
    <property type="entry name" value="Ubiquitin-like"/>
    <property type="match status" value="1"/>
</dbReference>
<dbReference type="PROSITE" id="PS50249">
    <property type="entry name" value="MPN"/>
    <property type="match status" value="1"/>
</dbReference>
<dbReference type="PROSITE" id="PS01358">
    <property type="entry name" value="ZF_RANBP2_1"/>
    <property type="match status" value="1"/>
</dbReference>
<dbReference type="PROSITE" id="PS50199">
    <property type="entry name" value="ZF_RANBP2_2"/>
    <property type="match status" value="1"/>
</dbReference>
<organism>
    <name type="scientific">Mus musculus</name>
    <name type="common">Mouse</name>
    <dbReference type="NCBI Taxonomy" id="10090"/>
    <lineage>
        <taxon>Eukaryota</taxon>
        <taxon>Metazoa</taxon>
        <taxon>Chordata</taxon>
        <taxon>Craniata</taxon>
        <taxon>Vertebrata</taxon>
        <taxon>Euteleostomi</taxon>
        <taxon>Mammalia</taxon>
        <taxon>Eutheria</taxon>
        <taxon>Euarchontoglires</taxon>
        <taxon>Glires</taxon>
        <taxon>Rodentia</taxon>
        <taxon>Myomorpha</taxon>
        <taxon>Muroidea</taxon>
        <taxon>Muridae</taxon>
        <taxon>Murinae</taxon>
        <taxon>Mus</taxon>
        <taxon>Mus</taxon>
    </lineage>
</organism>
<keyword id="KW-0002">3D-structure</keyword>
<keyword id="KW-0007">Acetylation</keyword>
<keyword id="KW-0025">Alternative splicing</keyword>
<keyword id="KW-0143">Chaperone</keyword>
<keyword id="KW-0963">Cytoplasm</keyword>
<keyword id="KW-0256">Endoplasmic reticulum</keyword>
<keyword id="KW-0479">Metal-binding</keyword>
<keyword id="KW-0539">Nucleus</keyword>
<keyword id="KW-1185">Reference proteome</keyword>
<keyword id="KW-0862">Zinc</keyword>
<keyword id="KW-0863">Zinc-finger</keyword>
<sequence length="608" mass="68017">MAESIIIRVQSPDGVKRITATKRETAATFLKKVAKEFGFQNNGFSVYINRNKTGEITASSSKSLHLLKIKHGDLLFLFPSSLAGPSSEMETSTSVGLKAFGAPNVVEDEIDQYLSKQDGKIYRSRDPQLCRHGPLGKCVHCVPLEPFDEDYLNHLEPPVKHMSFHAYIRKLTGGADKGKFVALENISCKIKSGCEGHLPWPNGICTKCQPSAITLNRQKYRHVDNIMFENHTVADRFLDFWRKTGNQHFGYLYGRYTEHKDIPLGIRAEVAAIYEPPQIGTQNSLELLEDPKAEVVDEIAAKLGLRKVGWIFTDLVSEDTRKGTVRYSRNKDTYFLSSEECITAGDFQNKHPNICRLSPDGHFGSKFVTAVATGGPDNQVHFEGYQVSNQCMALVRDECLLPCKDAPELGYAKESSSEQYVPDVFYKDIDKFGNEITQLARPLPVEYLIIDITTTFPKDPVYTFSISQNPFPIENRDVLGETQDFHSLATYLSQNTSSVFLDTISDFHLLLFLVTNEVMPLQDSISLLLEAVRTRNEELAQTWKKSEQWATIEQLCSTVGVQLPGLHEFGAVGGSARAATSAMWACQHCTFMNQPGTGHCEMCSLPRT</sequence>
<accession>P60670</accession>
<accession>B1ATY4</accession>
<accession>B1ATY5</accession>
<name>NPL4_MOUSE</name>
<reference key="1">
    <citation type="journal article" date="2003" name="DNA Res.">
        <title>Prediction of the coding sequences of mouse homologues of KIAA gene: III. The complete nucleotide sequences of 500 mouse KIAA-homologous cDNAs identified by screening of terminal sequences of cDNA clones randomly sampled from size-fractionated libraries.</title>
        <authorList>
            <person name="Okazaki N."/>
            <person name="Kikuno R."/>
            <person name="Ohara R."/>
            <person name="Inamoto S."/>
            <person name="Koseki H."/>
            <person name="Hiraoka S."/>
            <person name="Saga Y."/>
            <person name="Nagase T."/>
            <person name="Ohara O."/>
            <person name="Koga H."/>
        </authorList>
    </citation>
    <scope>NUCLEOTIDE SEQUENCE [LARGE SCALE MRNA] (ISOFORM 1)</scope>
    <source>
        <tissue>Embryonic tail</tissue>
    </source>
</reference>
<reference key="2">
    <citation type="journal article" date="2009" name="PLoS Biol.">
        <title>Lineage-specific biology revealed by a finished genome assembly of the mouse.</title>
        <authorList>
            <person name="Church D.M."/>
            <person name="Goodstadt L."/>
            <person name="Hillier L.W."/>
            <person name="Zody M.C."/>
            <person name="Goldstein S."/>
            <person name="She X."/>
            <person name="Bult C.J."/>
            <person name="Agarwala R."/>
            <person name="Cherry J.L."/>
            <person name="DiCuccio M."/>
            <person name="Hlavina W."/>
            <person name="Kapustin Y."/>
            <person name="Meric P."/>
            <person name="Maglott D."/>
            <person name="Birtle Z."/>
            <person name="Marques A.C."/>
            <person name="Graves T."/>
            <person name="Zhou S."/>
            <person name="Teague B."/>
            <person name="Potamousis K."/>
            <person name="Churas C."/>
            <person name="Place M."/>
            <person name="Herschleb J."/>
            <person name="Runnheim R."/>
            <person name="Forrest D."/>
            <person name="Amos-Landgraf J."/>
            <person name="Schwartz D.C."/>
            <person name="Cheng Z."/>
            <person name="Lindblad-Toh K."/>
            <person name="Eichler E.E."/>
            <person name="Ponting C.P."/>
        </authorList>
    </citation>
    <scope>NUCLEOTIDE SEQUENCE [LARGE SCALE GENOMIC DNA]</scope>
    <source>
        <strain>C57BL/6J</strain>
    </source>
</reference>
<reference key="3">
    <citation type="journal article" date="2004" name="Genome Res.">
        <title>The status, quality, and expansion of the NIH full-length cDNA project: the Mammalian Gene Collection (MGC).</title>
        <authorList>
            <consortium name="The MGC Project Team"/>
        </authorList>
    </citation>
    <scope>NUCLEOTIDE SEQUENCE [LARGE SCALE MRNA] (ISOFORM 2)</scope>
    <source>
        <strain>C57BL/6J</strain>
        <tissue>Brain</tissue>
    </source>
</reference>
<reference key="4">
    <citation type="journal article" date="2010" name="Cell">
        <title>A tissue-specific atlas of mouse protein phosphorylation and expression.</title>
        <authorList>
            <person name="Huttlin E.L."/>
            <person name="Jedrychowski M.P."/>
            <person name="Elias J.E."/>
            <person name="Goswami T."/>
            <person name="Rad R."/>
            <person name="Beausoleil S.A."/>
            <person name="Villen J."/>
            <person name="Haas W."/>
            <person name="Sowa M.E."/>
            <person name="Gygi S.P."/>
        </authorList>
    </citation>
    <scope>IDENTIFICATION BY MASS SPECTROMETRY [LARGE SCALE ANALYSIS]</scope>
    <source>
        <tissue>Brain</tissue>
        <tissue>Brown adipose tissue</tissue>
        <tissue>Heart</tissue>
        <tissue>Kidney</tissue>
        <tissue>Liver</tissue>
        <tissue>Lung</tissue>
        <tissue>Pancreas</tissue>
        <tissue>Spleen</tissue>
        <tissue>Testis</tissue>
    </source>
</reference>
<reference key="5">
    <citation type="journal article" date="2013" name="Mol. Cell">
        <title>SIRT5-mediated lysine desuccinylation impacts diverse metabolic pathways.</title>
        <authorList>
            <person name="Park J."/>
            <person name="Chen Y."/>
            <person name="Tishkoff D.X."/>
            <person name="Peng C."/>
            <person name="Tan M."/>
            <person name="Dai L."/>
            <person name="Xie Z."/>
            <person name="Zhang Y."/>
            <person name="Zwaans B.M."/>
            <person name="Skinner M.E."/>
            <person name="Lombard D.B."/>
            <person name="Zhao Y."/>
        </authorList>
    </citation>
    <scope>ACETYLATION [LARGE SCALE ANALYSIS] AT LYS-179</scope>
    <scope>IDENTIFICATION BY MASS SPECTROMETRY [LARGE SCALE ANALYSIS]</scope>
    <source>
        <tissue>Embryonic fibroblast</tissue>
    </source>
</reference>
<reference key="6">
    <citation type="journal article" date="2014" name="Biochem. J.">
        <title>Signal-peptide-mediated translocation is regulated by a p97-AIRAPL complex.</title>
        <authorList>
            <person name="Glinka T."/>
            <person name="Alter J."/>
            <person name="Braunstein I."/>
            <person name="Tzach L."/>
            <person name="Wei Sheng C."/>
            <person name="Geifman S."/>
            <person name="Edelmann M.J."/>
            <person name="Kessler B.M."/>
            <person name="Stanhill A."/>
        </authorList>
    </citation>
    <scope>INTERACTION WITH ZFAND2B</scope>
</reference>
<gene>
    <name type="primary">Nploc4</name>
    <name type="synonym">Kiaa1499</name>
    <name type="synonym">Npl4</name>
</gene>
<feature type="initiator methionine" description="Removed" evidence="1">
    <location>
        <position position="1"/>
    </location>
</feature>
<feature type="chain" id="PRO_0000057942" description="Nuclear protein localization protein 4 homolog">
    <location>
        <begin position="2"/>
        <end position="608"/>
    </location>
</feature>
<feature type="domain" description="MPN" evidence="4">
    <location>
        <begin position="226"/>
        <end position="363"/>
    </location>
</feature>
<feature type="zinc finger region" description="RanBP2-type" evidence="3">
    <location>
        <begin position="580"/>
        <end position="608"/>
    </location>
</feature>
<feature type="modified residue" description="N-acetylalanine" evidence="1">
    <location>
        <position position="2"/>
    </location>
</feature>
<feature type="modified residue" description="N6-acetyllysine" evidence="8">
    <location>
        <position position="179"/>
    </location>
</feature>
<feature type="splice variant" id="VSP_009790" description="In isoform 2." evidence="6">
    <location>
        <begin position="452"/>
        <end position="483"/>
    </location>
</feature>
<feature type="strand" evidence="9">
    <location>
        <begin position="8"/>
        <end position="10"/>
    </location>
</feature>
<feature type="strand" evidence="9">
    <location>
        <begin position="12"/>
        <end position="17"/>
    </location>
</feature>
<feature type="helix" evidence="9">
    <location>
        <begin position="26"/>
        <end position="36"/>
    </location>
</feature>
<feature type="turn" evidence="9">
    <location>
        <begin position="41"/>
        <end position="43"/>
    </location>
</feature>
<feature type="helix" evidence="9">
    <location>
        <begin position="52"/>
        <end position="55"/>
    </location>
</feature>
<feature type="strand" evidence="9">
    <location>
        <begin position="56"/>
        <end position="58"/>
    </location>
</feature>
<feature type="turn" evidence="9">
    <location>
        <begin position="63"/>
        <end position="67"/>
    </location>
</feature>
<protein>
    <recommendedName>
        <fullName>Nuclear protein localization protein 4 homolog</fullName>
        <shortName>Protein NPL4</shortName>
    </recommendedName>
</protein>
<evidence type="ECO:0000250" key="1">
    <source>
        <dbReference type="UniProtKB" id="Q8TAT6"/>
    </source>
</evidence>
<evidence type="ECO:0000250" key="2">
    <source>
        <dbReference type="UniProtKB" id="Q9ES54"/>
    </source>
</evidence>
<evidence type="ECO:0000255" key="3">
    <source>
        <dbReference type="PROSITE-ProRule" id="PRU00322"/>
    </source>
</evidence>
<evidence type="ECO:0000255" key="4">
    <source>
        <dbReference type="PROSITE-ProRule" id="PRU01182"/>
    </source>
</evidence>
<evidence type="ECO:0000269" key="5">
    <source>
    </source>
</evidence>
<evidence type="ECO:0000303" key="6">
    <source>
    </source>
</evidence>
<evidence type="ECO:0000305" key="7"/>
<evidence type="ECO:0007744" key="8">
    <source>
    </source>
</evidence>
<evidence type="ECO:0007829" key="9">
    <source>
        <dbReference type="PDB" id="2PJH"/>
    </source>
</evidence>